<proteinExistence type="inferred from homology"/>
<accession>A1V0T9</accession>
<keyword id="KW-0067">ATP-binding</keyword>
<keyword id="KW-0963">Cytoplasm</keyword>
<keyword id="KW-0418">Kinase</keyword>
<keyword id="KW-0520">NAD</keyword>
<keyword id="KW-0521">NADP</keyword>
<keyword id="KW-0547">Nucleotide-binding</keyword>
<keyword id="KW-0808">Transferase</keyword>
<comment type="function">
    <text evidence="1">Involved in the regulation of the intracellular balance of NAD and NADP, and is a key enzyme in the biosynthesis of NADP. Catalyzes specifically the phosphorylation on 2'-hydroxyl of the adenosine moiety of NAD to yield NADP.</text>
</comment>
<comment type="catalytic activity">
    <reaction evidence="1">
        <text>NAD(+) + ATP = ADP + NADP(+) + H(+)</text>
        <dbReference type="Rhea" id="RHEA:18629"/>
        <dbReference type="ChEBI" id="CHEBI:15378"/>
        <dbReference type="ChEBI" id="CHEBI:30616"/>
        <dbReference type="ChEBI" id="CHEBI:57540"/>
        <dbReference type="ChEBI" id="CHEBI:58349"/>
        <dbReference type="ChEBI" id="CHEBI:456216"/>
        <dbReference type="EC" id="2.7.1.23"/>
    </reaction>
</comment>
<comment type="cofactor">
    <cofactor evidence="1">
        <name>a divalent metal cation</name>
        <dbReference type="ChEBI" id="CHEBI:60240"/>
    </cofactor>
</comment>
<comment type="subcellular location">
    <subcellularLocation>
        <location evidence="1">Cytoplasm</location>
    </subcellularLocation>
</comment>
<comment type="similarity">
    <text evidence="1">Belongs to the NAD kinase family.</text>
</comment>
<evidence type="ECO:0000255" key="1">
    <source>
        <dbReference type="HAMAP-Rule" id="MF_00361"/>
    </source>
</evidence>
<gene>
    <name evidence="1" type="primary">nadK</name>
    <name type="ordered locus">BMASAVP1_A0493</name>
</gene>
<name>NADK_BURMS</name>
<organism>
    <name type="scientific">Burkholderia mallei (strain SAVP1)</name>
    <dbReference type="NCBI Taxonomy" id="320388"/>
    <lineage>
        <taxon>Bacteria</taxon>
        <taxon>Pseudomonadati</taxon>
        <taxon>Pseudomonadota</taxon>
        <taxon>Betaproteobacteria</taxon>
        <taxon>Burkholderiales</taxon>
        <taxon>Burkholderiaceae</taxon>
        <taxon>Burkholderia</taxon>
        <taxon>pseudomallei group</taxon>
    </lineage>
</organism>
<reference key="1">
    <citation type="journal article" date="2010" name="Genome Biol. Evol.">
        <title>Continuing evolution of Burkholderia mallei through genome reduction and large-scale rearrangements.</title>
        <authorList>
            <person name="Losada L."/>
            <person name="Ronning C.M."/>
            <person name="DeShazer D."/>
            <person name="Woods D."/>
            <person name="Fedorova N."/>
            <person name="Kim H.S."/>
            <person name="Shabalina S.A."/>
            <person name="Pearson T.R."/>
            <person name="Brinkac L."/>
            <person name="Tan P."/>
            <person name="Nandi T."/>
            <person name="Crabtree J."/>
            <person name="Badger J."/>
            <person name="Beckstrom-Sternberg S."/>
            <person name="Saqib M."/>
            <person name="Schutzer S.E."/>
            <person name="Keim P."/>
            <person name="Nierman W.C."/>
        </authorList>
    </citation>
    <scope>NUCLEOTIDE SEQUENCE [LARGE SCALE GENOMIC DNA]</scope>
    <source>
        <strain>SAVP1</strain>
    </source>
</reference>
<feature type="chain" id="PRO_1000005394" description="NAD kinase">
    <location>
        <begin position="1"/>
        <end position="300"/>
    </location>
</feature>
<feature type="active site" description="Proton acceptor" evidence="1">
    <location>
        <position position="75"/>
    </location>
</feature>
<feature type="binding site" evidence="1">
    <location>
        <begin position="75"/>
        <end position="76"/>
    </location>
    <ligand>
        <name>NAD(+)</name>
        <dbReference type="ChEBI" id="CHEBI:57540"/>
    </ligand>
</feature>
<feature type="binding site" evidence="1">
    <location>
        <begin position="149"/>
        <end position="150"/>
    </location>
    <ligand>
        <name>NAD(+)</name>
        <dbReference type="ChEBI" id="CHEBI:57540"/>
    </ligand>
</feature>
<feature type="binding site" evidence="1">
    <location>
        <position position="177"/>
    </location>
    <ligand>
        <name>NAD(+)</name>
        <dbReference type="ChEBI" id="CHEBI:57540"/>
    </ligand>
</feature>
<feature type="binding site" evidence="1">
    <location>
        <position position="179"/>
    </location>
    <ligand>
        <name>NAD(+)</name>
        <dbReference type="ChEBI" id="CHEBI:57540"/>
    </ligand>
</feature>
<feature type="binding site" evidence="1">
    <location>
        <begin position="190"/>
        <end position="195"/>
    </location>
    <ligand>
        <name>NAD(+)</name>
        <dbReference type="ChEBI" id="CHEBI:57540"/>
    </ligand>
</feature>
<feature type="binding site" evidence="1">
    <location>
        <position position="214"/>
    </location>
    <ligand>
        <name>NAD(+)</name>
        <dbReference type="ChEBI" id="CHEBI:57540"/>
    </ligand>
</feature>
<feature type="binding site" evidence="1">
    <location>
        <position position="248"/>
    </location>
    <ligand>
        <name>NAD(+)</name>
        <dbReference type="ChEBI" id="CHEBI:57540"/>
    </ligand>
</feature>
<dbReference type="EC" id="2.7.1.23" evidence="1"/>
<dbReference type="EMBL" id="CP000526">
    <property type="protein sequence ID" value="ABM52537.1"/>
    <property type="molecule type" value="Genomic_DNA"/>
</dbReference>
<dbReference type="RefSeq" id="WP_004200494.1">
    <property type="nucleotide sequence ID" value="NC_008785.1"/>
</dbReference>
<dbReference type="SMR" id="A1V0T9"/>
<dbReference type="KEGG" id="bmv:BMASAVP1_A0493"/>
<dbReference type="HOGENOM" id="CLU_008831_0_1_4"/>
<dbReference type="GO" id="GO:0005737">
    <property type="term" value="C:cytoplasm"/>
    <property type="evidence" value="ECO:0007669"/>
    <property type="project" value="UniProtKB-SubCell"/>
</dbReference>
<dbReference type="GO" id="GO:0005524">
    <property type="term" value="F:ATP binding"/>
    <property type="evidence" value="ECO:0007669"/>
    <property type="project" value="UniProtKB-KW"/>
</dbReference>
<dbReference type="GO" id="GO:0046872">
    <property type="term" value="F:metal ion binding"/>
    <property type="evidence" value="ECO:0007669"/>
    <property type="project" value="UniProtKB-UniRule"/>
</dbReference>
<dbReference type="GO" id="GO:0051287">
    <property type="term" value="F:NAD binding"/>
    <property type="evidence" value="ECO:0007669"/>
    <property type="project" value="UniProtKB-ARBA"/>
</dbReference>
<dbReference type="GO" id="GO:0003951">
    <property type="term" value="F:NAD+ kinase activity"/>
    <property type="evidence" value="ECO:0007669"/>
    <property type="project" value="UniProtKB-UniRule"/>
</dbReference>
<dbReference type="GO" id="GO:0019674">
    <property type="term" value="P:NAD metabolic process"/>
    <property type="evidence" value="ECO:0007669"/>
    <property type="project" value="InterPro"/>
</dbReference>
<dbReference type="GO" id="GO:0006741">
    <property type="term" value="P:NADP biosynthetic process"/>
    <property type="evidence" value="ECO:0007669"/>
    <property type="project" value="UniProtKB-UniRule"/>
</dbReference>
<dbReference type="Gene3D" id="3.40.50.10330">
    <property type="entry name" value="Probable inorganic polyphosphate/atp-NAD kinase, domain 1"/>
    <property type="match status" value="1"/>
</dbReference>
<dbReference type="Gene3D" id="2.60.200.30">
    <property type="entry name" value="Probable inorganic polyphosphate/atp-NAD kinase, domain 2"/>
    <property type="match status" value="1"/>
</dbReference>
<dbReference type="HAMAP" id="MF_00361">
    <property type="entry name" value="NAD_kinase"/>
    <property type="match status" value="1"/>
</dbReference>
<dbReference type="InterPro" id="IPR017438">
    <property type="entry name" value="ATP-NAD_kinase_N"/>
</dbReference>
<dbReference type="InterPro" id="IPR017437">
    <property type="entry name" value="ATP-NAD_kinase_PpnK-typ_C"/>
</dbReference>
<dbReference type="InterPro" id="IPR016064">
    <property type="entry name" value="NAD/diacylglycerol_kinase_sf"/>
</dbReference>
<dbReference type="InterPro" id="IPR002504">
    <property type="entry name" value="NADK"/>
</dbReference>
<dbReference type="NCBIfam" id="NF002561">
    <property type="entry name" value="PRK02155.1"/>
    <property type="match status" value="1"/>
</dbReference>
<dbReference type="PANTHER" id="PTHR20275">
    <property type="entry name" value="NAD KINASE"/>
    <property type="match status" value="1"/>
</dbReference>
<dbReference type="PANTHER" id="PTHR20275:SF0">
    <property type="entry name" value="NAD KINASE"/>
    <property type="match status" value="1"/>
</dbReference>
<dbReference type="Pfam" id="PF01513">
    <property type="entry name" value="NAD_kinase"/>
    <property type="match status" value="1"/>
</dbReference>
<dbReference type="Pfam" id="PF20143">
    <property type="entry name" value="NAD_kinase_C"/>
    <property type="match status" value="1"/>
</dbReference>
<dbReference type="SUPFAM" id="SSF111331">
    <property type="entry name" value="NAD kinase/diacylglycerol kinase-like"/>
    <property type="match status" value="1"/>
</dbReference>
<sequence length="300" mass="32380">MKIGHQFHTVALVGRSNTPGIAEPLASLAACIAKRGFEVVFEADTAQAIGSAGYPALTPAEIGARAGVAVVLGGDGTMLGMGRQLAPYKTPLIGINHGRLGFITDIPASDMREVVPMMLAGSYEREERTLLEARIVRNGEPIYHALAFNDVVVNRSGFSGMAELRVSVDGRFMYNQRSDGLIVATPTGSTAYALSSQGPILHPQLQGIVLVPIAPHALSNRPIVLPDDSKIAIQIIGGRDVNVNFDMQSFTALELNDTIEVRRSKHTVPFLHPVGYSYYATLRKKLHWNEHPSSEEDDDA</sequence>
<protein>
    <recommendedName>
        <fullName evidence="1">NAD kinase</fullName>
        <ecNumber evidence="1">2.7.1.23</ecNumber>
    </recommendedName>
    <alternativeName>
        <fullName evidence="1">ATP-dependent NAD kinase</fullName>
    </alternativeName>
</protein>